<organism>
    <name type="scientific">Alternaria brassicicola</name>
    <name type="common">Dark leaf spot agent</name>
    <dbReference type="NCBI Taxonomy" id="29001"/>
    <lineage>
        <taxon>Eukaryota</taxon>
        <taxon>Fungi</taxon>
        <taxon>Dikarya</taxon>
        <taxon>Ascomycota</taxon>
        <taxon>Pezizomycotina</taxon>
        <taxon>Dothideomycetes</taxon>
        <taxon>Pleosporomycetidae</taxon>
        <taxon>Pleosporales</taxon>
        <taxon>Pleosporineae</taxon>
        <taxon>Pleosporaceae</taxon>
        <taxon>Alternaria</taxon>
        <taxon>Alternaria sect. Brassicicola</taxon>
    </lineage>
</organism>
<evidence type="ECO:0000250" key="1">
    <source>
        <dbReference type="UniProtKB" id="A0A144KPJ6"/>
    </source>
</evidence>
<evidence type="ECO:0000255" key="2"/>
<evidence type="ECO:0000255" key="3">
    <source>
        <dbReference type="PROSITE-ProRule" id="PRU00258"/>
    </source>
</evidence>
<evidence type="ECO:0000256" key="4">
    <source>
        <dbReference type="SAM" id="MobiDB-lite"/>
    </source>
</evidence>
<evidence type="ECO:0000269" key="5">
    <source>
    </source>
</evidence>
<evidence type="ECO:0000303" key="6">
    <source>
    </source>
</evidence>
<evidence type="ECO:0000305" key="7"/>
<evidence type="ECO:0000305" key="8">
    <source>
    </source>
</evidence>
<proteinExistence type="evidence at transcript level"/>
<dbReference type="EC" id="6.3.2.-" evidence="8"/>
<dbReference type="EMBL" id="DQ860091">
    <property type="protein sequence ID" value="ABI51983.1"/>
    <property type="molecule type" value="Genomic_DNA"/>
</dbReference>
<dbReference type="SMR" id="Q09MP4"/>
<dbReference type="PHI-base" id="PHI:1009"/>
<dbReference type="GO" id="GO:0005737">
    <property type="term" value="C:cytoplasm"/>
    <property type="evidence" value="ECO:0007669"/>
    <property type="project" value="TreeGrafter"/>
</dbReference>
<dbReference type="GO" id="GO:0016874">
    <property type="term" value="F:ligase activity"/>
    <property type="evidence" value="ECO:0007669"/>
    <property type="project" value="UniProtKB-KW"/>
</dbReference>
<dbReference type="GO" id="GO:0031177">
    <property type="term" value="F:phosphopantetheine binding"/>
    <property type="evidence" value="ECO:0007669"/>
    <property type="project" value="InterPro"/>
</dbReference>
<dbReference type="GO" id="GO:0043041">
    <property type="term" value="P:amino acid activation for nonribosomal peptide biosynthetic process"/>
    <property type="evidence" value="ECO:0007669"/>
    <property type="project" value="TreeGrafter"/>
</dbReference>
<dbReference type="GO" id="GO:0044550">
    <property type="term" value="P:secondary metabolite biosynthetic process"/>
    <property type="evidence" value="ECO:0007669"/>
    <property type="project" value="TreeGrafter"/>
</dbReference>
<dbReference type="CDD" id="cd05918">
    <property type="entry name" value="A_NRPS_SidN3_like"/>
    <property type="match status" value="1"/>
</dbReference>
<dbReference type="CDD" id="cd19545">
    <property type="entry name" value="FUM14_C_NRPS-like"/>
    <property type="match status" value="1"/>
</dbReference>
<dbReference type="FunFam" id="3.30.300.30:FF:000015">
    <property type="entry name" value="Nonribosomal peptide synthase SidD"/>
    <property type="match status" value="1"/>
</dbReference>
<dbReference type="FunFam" id="3.30.559.30:FF:000003">
    <property type="entry name" value="Nonribosomal peptide synthase SidD"/>
    <property type="match status" value="1"/>
</dbReference>
<dbReference type="FunFam" id="1.10.1200.10:FF:000005">
    <property type="entry name" value="Nonribosomal peptide synthetase 1"/>
    <property type="match status" value="3"/>
</dbReference>
<dbReference type="Gene3D" id="3.30.300.30">
    <property type="match status" value="1"/>
</dbReference>
<dbReference type="Gene3D" id="1.10.1200.10">
    <property type="entry name" value="ACP-like"/>
    <property type="match status" value="3"/>
</dbReference>
<dbReference type="Gene3D" id="3.30.559.10">
    <property type="entry name" value="Chloramphenicol acetyltransferase-like domain"/>
    <property type="match status" value="2"/>
</dbReference>
<dbReference type="Gene3D" id="3.40.50.12780">
    <property type="entry name" value="N-terminal domain of ligase-like"/>
    <property type="match status" value="1"/>
</dbReference>
<dbReference type="Gene3D" id="3.30.559.30">
    <property type="entry name" value="Nonribosomal peptide synthetase, condensation domain"/>
    <property type="match status" value="1"/>
</dbReference>
<dbReference type="InterPro" id="IPR036736">
    <property type="entry name" value="ACP-like_sf"/>
</dbReference>
<dbReference type="InterPro" id="IPR045851">
    <property type="entry name" value="AMP-bd_C_sf"/>
</dbReference>
<dbReference type="InterPro" id="IPR020845">
    <property type="entry name" value="AMP-binding_CS"/>
</dbReference>
<dbReference type="InterPro" id="IPR000873">
    <property type="entry name" value="AMP-dep_synth/lig_dom"/>
</dbReference>
<dbReference type="InterPro" id="IPR042099">
    <property type="entry name" value="ANL_N_sf"/>
</dbReference>
<dbReference type="InterPro" id="IPR023213">
    <property type="entry name" value="CAT-like_dom_sf"/>
</dbReference>
<dbReference type="InterPro" id="IPR001242">
    <property type="entry name" value="Condensatn"/>
</dbReference>
<dbReference type="InterPro" id="IPR020806">
    <property type="entry name" value="PKS_PP-bd"/>
</dbReference>
<dbReference type="InterPro" id="IPR009081">
    <property type="entry name" value="PP-bd_ACP"/>
</dbReference>
<dbReference type="InterPro" id="IPR006162">
    <property type="entry name" value="Ppantetheine_attach_site"/>
</dbReference>
<dbReference type="PANTHER" id="PTHR45527:SF16">
    <property type="entry name" value="NONRIBOSOMAL PEPTIDE SYNTHASE ATNA-RELATED"/>
    <property type="match status" value="1"/>
</dbReference>
<dbReference type="PANTHER" id="PTHR45527">
    <property type="entry name" value="NONRIBOSOMAL PEPTIDE SYNTHETASE"/>
    <property type="match status" value="1"/>
</dbReference>
<dbReference type="Pfam" id="PF00501">
    <property type="entry name" value="AMP-binding"/>
    <property type="match status" value="1"/>
</dbReference>
<dbReference type="Pfam" id="PF00668">
    <property type="entry name" value="Condensation"/>
    <property type="match status" value="1"/>
</dbReference>
<dbReference type="Pfam" id="PF00550">
    <property type="entry name" value="PP-binding"/>
    <property type="match status" value="3"/>
</dbReference>
<dbReference type="SMART" id="SM00823">
    <property type="entry name" value="PKS_PP"/>
    <property type="match status" value="3"/>
</dbReference>
<dbReference type="SMART" id="SM01294">
    <property type="entry name" value="PKS_PP_betabranch"/>
    <property type="match status" value="1"/>
</dbReference>
<dbReference type="SUPFAM" id="SSF56801">
    <property type="entry name" value="Acetyl-CoA synthetase-like"/>
    <property type="match status" value="1"/>
</dbReference>
<dbReference type="SUPFAM" id="SSF47336">
    <property type="entry name" value="ACP-like"/>
    <property type="match status" value="3"/>
</dbReference>
<dbReference type="SUPFAM" id="SSF52777">
    <property type="entry name" value="CoA-dependent acyltransferases"/>
    <property type="match status" value="3"/>
</dbReference>
<dbReference type="PROSITE" id="PS00455">
    <property type="entry name" value="AMP_BINDING"/>
    <property type="match status" value="1"/>
</dbReference>
<dbReference type="PROSITE" id="PS50075">
    <property type="entry name" value="CARRIER"/>
    <property type="match status" value="3"/>
</dbReference>
<dbReference type="PROSITE" id="PS00012">
    <property type="entry name" value="PHOSPHOPANTETHEINE"/>
    <property type="match status" value="3"/>
</dbReference>
<comment type="function">
    <text evidence="5">NRPS involved in extracellular coprogen-type siderophores biosynthesis (PubMed:17056706). The role of extracellular siderophores in fungal virulence to plants is to supply iron to the fungus during plant infection, but not to act as phytotoxins, depriving their hosts of iron (PubMed:17056706).</text>
</comment>
<comment type="pathway">
    <text evidence="5">Siderophore biosynthesis.</text>
</comment>
<comment type="induction">
    <text evidence="5">Expression is up-regulated under iron depletion (PubMed:17056706).</text>
</comment>
<comment type="domain">
    <text evidence="1 8">NRP synthetases are composed of discrete domains (adenylation (A), thiolation (T) or peptidyl carrier protein (PCP) and condensation (C) domains) which when grouped together are referred to as a single module (By similarity). Each module is responsible for the recognition (via the A domain) and incorporation of a single amino acid into the growing peptide product (By similarity). Thus, an NRP synthetase is generally composed of one or more modules and can terminate in a thioesterase domain (TE) that releases the newly synthesized peptide from the enzyme (By similarity). Occasionally, methyltransferase domains (responsible for amino acid methylation) are present within the NRP synthetase (By similarity). NPS6 contains a degenerate A domain (dA) in the second module and has the following architecture: A-T-C-dA-T-T-C (PubMed:17056706).</text>
</comment>
<comment type="disruption phenotype">
    <text evidence="5">Leads to increased sensitivity to oxidative stress and raduces the virulence toward Arabidopsis thaliana plants (PubMed:17056706).</text>
</comment>
<comment type="similarity">
    <text evidence="7">Belongs to the NRP synthetase family.</text>
</comment>
<sequence>MSHHQAVSQLHLFVSILDALFSDPDCLLSSFMNVTEDELDELWSWNSPLQPELRFCMHEKVSEQAALHPEKIAIDAWDGTLTYRQVEDYSTDLAQTLQLLDGSHNQIIPVLFEKSRWTSVAVLAIMKAGACFALLDPAQPEGRLRAVVQQVSARLFVSSKAQATLAARVAPAATIIPVSASKFDKVYSPCAAQQPKTTLPPVSPDQPLYIQFTSGSTGLPKGCILTHSQYTSGAIPRADAVGYRSHSRVLDFASYAFDVCIDSMLCTLAHGATLCTPSDERRMNDMSGAMRDMRVTFAGMTPSVARTLDVDILDHLDSIALGGEGVSTSDAMSWGQRTRVVNAYGPSEATVGATINDNVASKPYITMGKRKGCAIWLTDPEDSNKLVPPGAVGELLIEGPIVATDISITRRKPRKFSLKIPNSWLKGSKSFPGRHGRIYKTGDLVRFDPDGNGEPIFVGRQDQQVKLRGQRIKLAEIEFNMQKHLPADTQLAVEVIKPSGGGEQTLVAFLVEQKKNGMRHLDGNVFGSFTTKFQSALKDMTKQLAVDLPGYMVPSAYIPLWKMPLLVSCKTDRKRLREIGTSVTRQDLRRFNSVISEKKEPTTEMEIKLRSLWGKLLGGEDDFSANDNFFSMGGDSLRAMRLVAAAREAGLVLNVPDIMLNPTLSAMATKIKPLSEEATNDVPAFSLIEKDWDMNSAKAETAKLCGVDVNEVQDVYPCTPLQEGLMALSAKFQDAYVAQRIATLPSETAQRLKEAFDTAAEGSPILRTRIVNVSGRGLFQVVLKNGRLLREHGADPAEYLRRDREEAMDLGTALFRYGLVQEAGSDETHFVITMHHAVYDGWSMPLIFDRINRAFNGLQTERSVSFKHFIKHLTSLDPAEAQDYWRERLAGVNPYQFPPLPQKGYTTQADSLLEHYVSVPTTAHNKLTLATIIRGAWALVSSLYMGHPDVVFGETLTGRSAPVNGIEEIEGPMITTVPIRVRLSLDRPISDYLQAVHAQTVKQIPHEHLGLQNIRRLSKDARVACDLRTGLVLHPREDDVGEVDMEAVPANTFLPADDAEAAREALKFNTYALMLVCTLDENGFLIMASFDSKCISKDAMERVLVVMNRIVTAFLGNPESKLGDVAVLDPSEAQDAEAMRPRDVMSDSGIGTSPIDSPKLDAAMKALSPNEEKLHSILGRILGMPETEIKSSDSFFELGGDSIGAMRLVSDARAQGLTLTVAQVFQSQSLAELAASIGNEKEDKLLDILSRILGMPKSEINGSDSFFELGGDSIGAMRLVSDARAQGLNLTVAQVFQSQSLSELASSAEETDSPQTETNSNAPYAALGKEASLYSPDRIGAYLQDQSWEIVDVYPTRPLQQLAVEGTVDLPRYSLRYELIKFATPINRQKLEQACQELVARNEVLRTVFVKDESKVLGVVLSSPRVPYSEIAVPDGEDINAFSQANIQKDIEAPKPHGSS</sequence>
<protein>
    <recommendedName>
        <fullName evidence="6">Nonribosomal peptide synthetase 6</fullName>
        <shortName evidence="6">NPRS 6</shortName>
        <ecNumber evidence="8">6.3.2.-</ecNumber>
    </recommendedName>
    <alternativeName>
        <fullName evidence="6">Extracellular siderophore synthetase</fullName>
    </alternativeName>
</protein>
<keyword id="KW-0436">Ligase</keyword>
<keyword id="KW-0511">Multifunctional enzyme</keyword>
<keyword id="KW-0596">Phosphopantetheine</keyword>
<keyword id="KW-0597">Phosphoprotein</keyword>
<accession>Q09MP4</accession>
<reference key="1">
    <citation type="journal article" date="2006" name="Plant Cell">
        <title>NPS6, encoding a nonribosomal peptide synthetase involved in siderophore-mediated iron metabolism, is a conserved virulence determinant of plant pathogenic ascomycetes.</title>
        <authorList>
            <person name="Oide S."/>
            <person name="Moeder W."/>
            <person name="Krasnoff S."/>
            <person name="Gibson D."/>
            <person name="Haas H."/>
            <person name="Yoshioka K."/>
            <person name="Turgeon B.G."/>
        </authorList>
    </citation>
    <scope>NUCLEOTIDE SEQUENCE [GENOMIC DNA]</scope>
    <scope>FUNCTION</scope>
    <scope>DOMAIN</scope>
    <scope>DISRUPTION PHENOTYPE</scope>
    <scope>INDUCTION</scope>
    <scope>PATHWAY</scope>
    <source>
        <strain>Tf383</strain>
    </source>
</reference>
<name>NPS6_ALTBR</name>
<feature type="chain" id="PRO_5004167804" description="Nonribosomal peptide synthetase 6" evidence="2">
    <location>
        <begin position="1"/>
        <end position="1460"/>
    </location>
</feature>
<feature type="domain" description="Carrier 1" evidence="3">
    <location>
        <begin position="600"/>
        <end position="675"/>
    </location>
</feature>
<feature type="domain" description="Carrier 2" evidence="3">
    <location>
        <begin position="1168"/>
        <end position="1241"/>
    </location>
</feature>
<feature type="domain" description="Carrier 3" evidence="3">
    <location>
        <begin position="1236"/>
        <end position="1312"/>
    </location>
</feature>
<feature type="region of interest" description="Adenylation" evidence="2">
    <location>
        <begin position="63"/>
        <end position="468"/>
    </location>
</feature>
<feature type="region of interest" description="Condensation" evidence="2">
    <location>
        <begin position="712"/>
        <end position="1135"/>
    </location>
</feature>
<feature type="region of interest" description="Disordered" evidence="4">
    <location>
        <begin position="1303"/>
        <end position="1324"/>
    </location>
</feature>
<feature type="compositionally biased region" description="Polar residues" evidence="4">
    <location>
        <begin position="1313"/>
        <end position="1322"/>
    </location>
</feature>
<feature type="modified residue" description="O-(pantetheine 4'-phosphoryl)serine" evidence="3">
    <location>
        <position position="636"/>
    </location>
</feature>
<feature type="modified residue" description="O-(pantetheine 4'-phosphoryl)serine" evidence="3">
    <location>
        <position position="1202"/>
    </location>
</feature>
<feature type="modified residue" description="O-(pantetheine 4'-phosphoryl)serine" evidence="3">
    <location>
        <position position="1273"/>
    </location>
</feature>
<feature type="non-terminal residue" evidence="7">
    <location>
        <position position="1460"/>
    </location>
</feature>
<gene>
    <name evidence="6" type="primary">NPS6</name>
</gene>